<protein>
    <recommendedName>
        <fullName>Uncharacterized protein YafX</fullName>
    </recommendedName>
</protein>
<dbReference type="EMBL" id="U70214">
    <property type="protein sequence ID" value="AAB08668.1"/>
    <property type="status" value="ALT_INIT"/>
    <property type="molecule type" value="Genomic_DNA"/>
</dbReference>
<dbReference type="EMBL" id="U00096">
    <property type="protein sequence ID" value="AAC73351.1"/>
    <property type="molecule type" value="Genomic_DNA"/>
</dbReference>
<dbReference type="EMBL" id="AP009048">
    <property type="protein sequence ID" value="BAA77917.2"/>
    <property type="molecule type" value="Genomic_DNA"/>
</dbReference>
<dbReference type="PIR" id="H64749">
    <property type="entry name" value="H64749"/>
</dbReference>
<dbReference type="RefSeq" id="NP_414782.1">
    <property type="nucleotide sequence ID" value="NC_000913.3"/>
</dbReference>
<dbReference type="RefSeq" id="WP_000211838.1">
    <property type="nucleotide sequence ID" value="NZ_LN832404.1"/>
</dbReference>
<dbReference type="SMR" id="P75676"/>
<dbReference type="BioGRID" id="4260681">
    <property type="interactions" value="6"/>
</dbReference>
<dbReference type="FunCoup" id="P75676">
    <property type="interactions" value="61"/>
</dbReference>
<dbReference type="STRING" id="511145.b0248"/>
<dbReference type="PaxDb" id="511145-b0248"/>
<dbReference type="EnsemblBacteria" id="AAC73351">
    <property type="protein sequence ID" value="AAC73351"/>
    <property type="gene ID" value="b0248"/>
</dbReference>
<dbReference type="GeneID" id="944931"/>
<dbReference type="KEGG" id="ecj:JW5022"/>
<dbReference type="KEGG" id="eco:b0248"/>
<dbReference type="KEGG" id="ecoc:C3026_01180"/>
<dbReference type="KEGG" id="ecoc:C3026_23915"/>
<dbReference type="PATRIC" id="fig|511145.12.peg.250"/>
<dbReference type="EchoBASE" id="EB3120"/>
<dbReference type="eggNOG" id="ENOG502ZPKK">
    <property type="taxonomic scope" value="Bacteria"/>
</dbReference>
<dbReference type="HOGENOM" id="CLU_085306_1_0_6"/>
<dbReference type="InParanoid" id="P75676"/>
<dbReference type="OMA" id="YAYSADH"/>
<dbReference type="OrthoDB" id="1164967at2"/>
<dbReference type="PhylomeDB" id="P75676"/>
<dbReference type="BioCyc" id="EcoCyc:G6123-MONOMER"/>
<dbReference type="PRO" id="PR:P75676"/>
<dbReference type="Proteomes" id="UP000000625">
    <property type="component" value="Chromosome"/>
</dbReference>
<dbReference type="Gene3D" id="3.30.70.3580">
    <property type="entry name" value="Antirestriction protein"/>
    <property type="match status" value="1"/>
</dbReference>
<dbReference type="InterPro" id="IPR004914">
    <property type="entry name" value="Antirestrict"/>
</dbReference>
<dbReference type="InterPro" id="IPR042297">
    <property type="entry name" value="Antirestriction_sf"/>
</dbReference>
<dbReference type="Pfam" id="PF03230">
    <property type="entry name" value="Antirestrict"/>
    <property type="match status" value="1"/>
</dbReference>
<gene>
    <name type="primary">yafX</name>
    <name type="ordered locus">b0248</name>
    <name type="ordered locus">JW5022</name>
</gene>
<name>YAFX_ECOLI</name>
<evidence type="ECO:0000305" key="1"/>
<keyword id="KW-1185">Reference proteome</keyword>
<accession>P75676</accession>
<accession>P71286</accession>
<accession>Q9R2D9</accession>
<feature type="chain" id="PRO_0000168545" description="Uncharacterized protein YafX">
    <location>
        <begin position="1"/>
        <end position="152"/>
    </location>
</feature>
<organism>
    <name type="scientific">Escherichia coli (strain K12)</name>
    <dbReference type="NCBI Taxonomy" id="83333"/>
    <lineage>
        <taxon>Bacteria</taxon>
        <taxon>Pseudomonadati</taxon>
        <taxon>Pseudomonadota</taxon>
        <taxon>Gammaproteobacteria</taxon>
        <taxon>Enterobacterales</taxon>
        <taxon>Enterobacteriaceae</taxon>
        <taxon>Escherichia</taxon>
    </lineage>
</organism>
<comment type="similarity">
    <text evidence="1">Belongs to the antirestriction protein family.</text>
</comment>
<comment type="sequence caution" evidence="1">
    <conflict type="erroneous initiation">
        <sequence resource="EMBL-CDS" id="AAB08668"/>
    </conflict>
</comment>
<sequence length="152" mass="17420">MTTQTQHDLAPANQPEFELTVTPVPDEQRIDFWPQYFGAIPQWLLLEPHIFAWMDRFCEGYSGGIWSFYTLSNGGAFMSPEPDNDETWRLFNCLNGNDAQMSAEAAGIAVCLIAYSHHACRTECDAMTAHYYRLREYAMQHPEAHAILRIID</sequence>
<reference key="1">
    <citation type="submission" date="1996-02" db="EMBL/GenBank/DDBJ databases">
        <title>Systematic sequencing of the Escherichia coli genome: analysis of the 4.0 - 6.0 min (189,987 - 281,416bp) region.</title>
        <authorList>
            <person name="Takemoto K."/>
            <person name="Mori H."/>
            <person name="Murayama N."/>
            <person name="Kataoka K."/>
            <person name="Yano M."/>
            <person name="Itoh T."/>
            <person name="Yamamoto Y."/>
            <person name="Inokuchi H."/>
            <person name="Miki T."/>
            <person name="Hatada E."/>
            <person name="Fukuda R."/>
            <person name="Ichihara S."/>
            <person name="Mizuno T."/>
            <person name="Makino K."/>
            <person name="Nakata A."/>
            <person name="Yura T."/>
            <person name="Sampei G."/>
            <person name="Mizobuchi K."/>
        </authorList>
    </citation>
    <scope>NUCLEOTIDE SEQUENCE [LARGE SCALE GENOMIC DNA]</scope>
    <source>
        <strain>K12 / W3110 / ATCC 27325 / DSM 5911</strain>
    </source>
</reference>
<reference key="2">
    <citation type="submission" date="1997-01" db="EMBL/GenBank/DDBJ databases">
        <title>Sequence of minutes 4-25 of Escherichia coli.</title>
        <authorList>
            <person name="Chung E."/>
            <person name="Allen E."/>
            <person name="Araujo R."/>
            <person name="Aparicio A.M."/>
            <person name="Davis K."/>
            <person name="Duncan M."/>
            <person name="Federspiel N."/>
            <person name="Hyman R."/>
            <person name="Kalman S."/>
            <person name="Komp C."/>
            <person name="Kurdi O."/>
            <person name="Lew H."/>
            <person name="Lin D."/>
            <person name="Namath A."/>
            <person name="Oefner P."/>
            <person name="Roberts D."/>
            <person name="Schramm S."/>
            <person name="Davis R.W."/>
        </authorList>
    </citation>
    <scope>NUCLEOTIDE SEQUENCE [LARGE SCALE GENOMIC DNA]</scope>
    <source>
        <strain>K12 / MG1655 / ATCC 47076</strain>
    </source>
</reference>
<reference key="3">
    <citation type="journal article" date="1997" name="Science">
        <title>The complete genome sequence of Escherichia coli K-12.</title>
        <authorList>
            <person name="Blattner F.R."/>
            <person name="Plunkett G. III"/>
            <person name="Bloch C.A."/>
            <person name="Perna N.T."/>
            <person name="Burland V."/>
            <person name="Riley M."/>
            <person name="Collado-Vides J."/>
            <person name="Glasner J.D."/>
            <person name="Rode C.K."/>
            <person name="Mayhew G.F."/>
            <person name="Gregor J."/>
            <person name="Davis N.W."/>
            <person name="Kirkpatrick H.A."/>
            <person name="Goeden M.A."/>
            <person name="Rose D.J."/>
            <person name="Mau B."/>
            <person name="Shao Y."/>
        </authorList>
    </citation>
    <scope>NUCLEOTIDE SEQUENCE [LARGE SCALE GENOMIC DNA]</scope>
    <source>
        <strain>K12 / MG1655 / ATCC 47076</strain>
    </source>
</reference>
<reference key="4">
    <citation type="journal article" date="2006" name="Mol. Syst. Biol.">
        <title>Highly accurate genome sequences of Escherichia coli K-12 strains MG1655 and W3110.</title>
        <authorList>
            <person name="Hayashi K."/>
            <person name="Morooka N."/>
            <person name="Yamamoto Y."/>
            <person name="Fujita K."/>
            <person name="Isono K."/>
            <person name="Choi S."/>
            <person name="Ohtsubo E."/>
            <person name="Baba T."/>
            <person name="Wanner B.L."/>
            <person name="Mori H."/>
            <person name="Horiuchi T."/>
        </authorList>
    </citation>
    <scope>NUCLEOTIDE SEQUENCE [LARGE SCALE GENOMIC DNA]</scope>
    <source>
        <strain>K12 / W3110 / ATCC 27325 / DSM 5911</strain>
    </source>
</reference>
<proteinExistence type="inferred from homology"/>